<keyword id="KW-0238">DNA-binding</keyword>
<keyword id="KW-0371">Homeobox</keyword>
<keyword id="KW-0479">Metal-binding</keyword>
<keyword id="KW-0539">Nucleus</keyword>
<keyword id="KW-1185">Reference proteome</keyword>
<keyword id="KW-0804">Transcription</keyword>
<keyword id="KW-0805">Transcription regulation</keyword>
<keyword id="KW-0862">Zinc</keyword>
<keyword id="KW-0863">Zinc-finger</keyword>
<gene>
    <name type="primary">HAT3.1</name>
    <name type="ordered locus">At3g19510</name>
    <name type="ORF">MLD14.25</name>
    <name type="ORF">MLD14.37</name>
</gene>
<proteinExistence type="evidence at protein level"/>
<organism>
    <name type="scientific">Arabidopsis thaliana</name>
    <name type="common">Mouse-ear cress</name>
    <dbReference type="NCBI Taxonomy" id="3702"/>
    <lineage>
        <taxon>Eukaryota</taxon>
        <taxon>Viridiplantae</taxon>
        <taxon>Streptophyta</taxon>
        <taxon>Embryophyta</taxon>
        <taxon>Tracheophyta</taxon>
        <taxon>Spermatophyta</taxon>
        <taxon>Magnoliopsida</taxon>
        <taxon>eudicotyledons</taxon>
        <taxon>Gunneridae</taxon>
        <taxon>Pentapetalae</taxon>
        <taxon>rosids</taxon>
        <taxon>malvids</taxon>
        <taxon>Brassicales</taxon>
        <taxon>Brassicaceae</taxon>
        <taxon>Camelineae</taxon>
        <taxon>Arabidopsis</taxon>
    </lineage>
</organism>
<reference key="1">
    <citation type="journal article" date="1993" name="Plant J.">
        <title>HAT3.1, a novel Arabidopsis homeodomain protein containing a conserved cysteine-rich region.</title>
        <authorList>
            <person name="Schindler U."/>
            <person name="Beckmann H."/>
            <person name="Cashmore A.R."/>
        </authorList>
    </citation>
    <scope>NUCLEOTIDE SEQUENCE [MRNA]</scope>
</reference>
<reference key="2">
    <citation type="journal article" date="2000" name="DNA Res.">
        <title>Structural analysis of Arabidopsis thaliana chromosome 3. I. Sequence features of the regions of 4,504,864 bp covered by sixty P1 and TAC clones.</title>
        <authorList>
            <person name="Sato S."/>
            <person name="Nakamura Y."/>
            <person name="Kaneko T."/>
            <person name="Katoh T."/>
            <person name="Asamizu E."/>
            <person name="Tabata S."/>
        </authorList>
    </citation>
    <scope>NUCLEOTIDE SEQUENCE [LARGE SCALE GENOMIC DNA]</scope>
    <source>
        <strain>cv. Columbia</strain>
    </source>
</reference>
<reference key="3">
    <citation type="journal article" date="2017" name="Plant J.">
        <title>Araport11: a complete reannotation of the Arabidopsis thaliana reference genome.</title>
        <authorList>
            <person name="Cheng C.Y."/>
            <person name="Krishnakumar V."/>
            <person name="Chan A.P."/>
            <person name="Thibaud-Nissen F."/>
            <person name="Schobel S."/>
            <person name="Town C.D."/>
        </authorList>
    </citation>
    <scope>GENOME REANNOTATION</scope>
    <source>
        <strain>cv. Columbia</strain>
    </source>
</reference>
<reference key="4">
    <citation type="journal article" date="2002" name="Science">
        <title>Functional annotation of a full-length Arabidopsis cDNA collection.</title>
        <authorList>
            <person name="Seki M."/>
            <person name="Narusaka M."/>
            <person name="Kamiya A."/>
            <person name="Ishida J."/>
            <person name="Satou M."/>
            <person name="Sakurai T."/>
            <person name="Nakajima M."/>
            <person name="Enju A."/>
            <person name="Akiyama K."/>
            <person name="Oono Y."/>
            <person name="Muramatsu M."/>
            <person name="Hayashizaki Y."/>
            <person name="Kawai J."/>
            <person name="Carninci P."/>
            <person name="Itoh M."/>
            <person name="Ishii Y."/>
            <person name="Arakawa T."/>
            <person name="Shibata K."/>
            <person name="Shinagawa A."/>
            <person name="Shinozaki K."/>
        </authorList>
    </citation>
    <scope>NUCLEOTIDE SEQUENCE [LARGE SCALE MRNA]</scope>
    <source>
        <strain>cv. Columbia</strain>
    </source>
</reference>
<reference key="5">
    <citation type="journal article" date="2003" name="Science">
        <title>Empirical analysis of transcriptional activity in the Arabidopsis genome.</title>
        <authorList>
            <person name="Yamada K."/>
            <person name="Lim J."/>
            <person name="Dale J.M."/>
            <person name="Chen H."/>
            <person name="Shinn P."/>
            <person name="Palm C.J."/>
            <person name="Southwick A.M."/>
            <person name="Wu H.C."/>
            <person name="Kim C.J."/>
            <person name="Nguyen M."/>
            <person name="Pham P.K."/>
            <person name="Cheuk R.F."/>
            <person name="Karlin-Newmann G."/>
            <person name="Liu S.X."/>
            <person name="Lam B."/>
            <person name="Sakano H."/>
            <person name="Wu T."/>
            <person name="Yu G."/>
            <person name="Miranda M."/>
            <person name="Quach H.L."/>
            <person name="Tripp M."/>
            <person name="Chang C.H."/>
            <person name="Lee J.M."/>
            <person name="Toriumi M.J."/>
            <person name="Chan M.M."/>
            <person name="Tang C.C."/>
            <person name="Onodera C.S."/>
            <person name="Deng J.M."/>
            <person name="Akiyama K."/>
            <person name="Ansari Y."/>
            <person name="Arakawa T."/>
            <person name="Banh J."/>
            <person name="Banno F."/>
            <person name="Bowser L."/>
            <person name="Brooks S.Y."/>
            <person name="Carninci P."/>
            <person name="Chao Q."/>
            <person name="Choy N."/>
            <person name="Enju A."/>
            <person name="Goldsmith A.D."/>
            <person name="Gurjal M."/>
            <person name="Hansen N.F."/>
            <person name="Hayashizaki Y."/>
            <person name="Johnson-Hopson C."/>
            <person name="Hsuan V.W."/>
            <person name="Iida K."/>
            <person name="Karnes M."/>
            <person name="Khan S."/>
            <person name="Koesema E."/>
            <person name="Ishida J."/>
            <person name="Jiang P.X."/>
            <person name="Jones T."/>
            <person name="Kawai J."/>
            <person name="Kamiya A."/>
            <person name="Meyers C."/>
            <person name="Nakajima M."/>
            <person name="Narusaka M."/>
            <person name="Seki M."/>
            <person name="Sakurai T."/>
            <person name="Satou M."/>
            <person name="Tamse R."/>
            <person name="Vaysberg M."/>
            <person name="Wallender E.K."/>
            <person name="Wong C."/>
            <person name="Yamamura Y."/>
            <person name="Yuan S."/>
            <person name="Shinozaki K."/>
            <person name="Davis R.W."/>
            <person name="Theologis A."/>
            <person name="Ecker J.R."/>
        </authorList>
    </citation>
    <scope>NUCLEOTIDE SEQUENCE [LARGE SCALE MRNA]</scope>
    <source>
        <strain>cv. Columbia</strain>
    </source>
</reference>
<name>HAT31_ARATH</name>
<protein>
    <recommendedName>
        <fullName>Homeobox protein HAT3.1</fullName>
    </recommendedName>
</protein>
<sequence length="723" mass="80461">MYKAVSKRVTRSSGSGLKQTNVDNGGEISPTVDRVSEQGKSSEAGSHMPTDANGNGHLHHEIMDHGKGNEEQKPTPQTVKKDSNTNTKFSGSHRELVIGLPCRGQFEIHNRSRASTSSKRLGGGGERNVLFASHKRAQRSKEDAGPSSVVANSTPVGRPKKKNKTMNKGQVREDDEYTRIKKKLRYFLNRINYEQSLIDAYSLEGWKGSSLEKIRPEKELERATKEILRRKLKIRDLFQHLDTLCAEGSLPESLFDTDGEISSEDIFCAKCGSKDLSVDNDIILCDGFCDRGFHQYCLEPPLRKEDIPPDDEGWLCPGCDCKDDSLDLLNDSLGTKFSVSDSWEKIFPEAAAALVGGGQNLDCDLPSDDSDDEEYDPDCLNDNENDEDGSDDNEESENEDGSSDETEFTSASDEMIESFKEGKDIMKDVMALPSDDSEDDDYDPDAPTCDDDKESSNSDCTSDTEDLETSFKGDETNQQAEDTPLEDPGRQTSQLQGDAILESDVGLDDGPAGVSRRRNVERLDYKKLYDEEYDNVPTSSSDDDDWDKTARMGKEDSESEDEGDTVPLKQSSNAEDHTSKKLIRKSKRADKKDTLEMPQEGPGENGGSGEIEKSSSSACKQTDPKTQRLYISFQENQYPDKATKESLAKELQMTVKQVNNWFKHRRWSINSKPLVSEENVEKLKTGKEGECETSVAGSSKQTMETESVAEKPTNTGSRKRRRK</sequence>
<feature type="chain" id="PRO_0000049142" description="Homeobox protein HAT3.1">
    <location>
        <begin position="1"/>
        <end position="723"/>
    </location>
</feature>
<feature type="zinc finger region" description="PHD-type" evidence="2">
    <location>
        <begin position="265"/>
        <end position="322"/>
    </location>
</feature>
<feature type="DNA-binding region" description="Homeobox" evidence="1">
    <location>
        <begin position="614"/>
        <end position="673"/>
    </location>
</feature>
<feature type="region of interest" description="Disordered" evidence="3">
    <location>
        <begin position="1"/>
        <end position="94"/>
    </location>
</feature>
<feature type="region of interest" description="Disordered" evidence="3">
    <location>
        <begin position="135"/>
        <end position="173"/>
    </location>
</feature>
<feature type="region of interest" description="Disordered" evidence="3">
    <location>
        <begin position="357"/>
        <end position="628"/>
    </location>
</feature>
<feature type="region of interest" description="Disordered" evidence="3">
    <location>
        <begin position="680"/>
        <end position="723"/>
    </location>
</feature>
<feature type="compositionally biased region" description="Basic residues" evidence="3">
    <location>
        <begin position="1"/>
        <end position="10"/>
    </location>
</feature>
<feature type="compositionally biased region" description="Polar residues" evidence="3">
    <location>
        <begin position="11"/>
        <end position="23"/>
    </location>
</feature>
<feature type="compositionally biased region" description="Basic and acidic residues" evidence="3">
    <location>
        <begin position="58"/>
        <end position="83"/>
    </location>
</feature>
<feature type="compositionally biased region" description="Acidic residues" evidence="3">
    <location>
        <begin position="365"/>
        <end position="407"/>
    </location>
</feature>
<feature type="compositionally biased region" description="Basic and acidic residues" evidence="3">
    <location>
        <begin position="417"/>
        <end position="427"/>
    </location>
</feature>
<feature type="compositionally biased region" description="Acidic residues" evidence="3">
    <location>
        <begin position="435"/>
        <end position="453"/>
    </location>
</feature>
<feature type="compositionally biased region" description="Basic and acidic residues" evidence="3">
    <location>
        <begin position="518"/>
        <end position="530"/>
    </location>
</feature>
<feature type="compositionally biased region" description="Basic and acidic residues" evidence="3">
    <location>
        <begin position="547"/>
        <end position="556"/>
    </location>
</feature>
<feature type="compositionally biased region" description="Basic residues" evidence="3">
    <location>
        <begin position="580"/>
        <end position="589"/>
    </location>
</feature>
<feature type="compositionally biased region" description="Basic and acidic residues" evidence="3">
    <location>
        <begin position="680"/>
        <end position="690"/>
    </location>
</feature>
<feature type="compositionally biased region" description="Polar residues" evidence="3">
    <location>
        <begin position="695"/>
        <end position="705"/>
    </location>
</feature>
<feature type="sequence conflict" description="In Ref. 1; CAA49263." evidence="4" ref="1">
    <original>D</original>
    <variation>A</variation>
    <location>
        <position position="368"/>
    </location>
</feature>
<evidence type="ECO:0000255" key="1">
    <source>
        <dbReference type="PROSITE-ProRule" id="PRU00108"/>
    </source>
</evidence>
<evidence type="ECO:0000255" key="2">
    <source>
        <dbReference type="PROSITE-ProRule" id="PRU00146"/>
    </source>
</evidence>
<evidence type="ECO:0000256" key="3">
    <source>
        <dbReference type="SAM" id="MobiDB-lite"/>
    </source>
</evidence>
<evidence type="ECO:0000305" key="4"/>
<comment type="function">
    <text>Binds only to large DNA fragments. Recognizes a DNA fragment carrying 8 copies of box7 motif of the light-induced cab-E promoter of Nicotiana plumbaginifolia. Also recognizes the box7m1 motif.</text>
</comment>
<comment type="interaction">
    <interactant intactId="EBI-4457944">
        <id>Q04996</id>
    </interactant>
    <interactant intactId="EBI-4425826">
        <id>Q8LA53</id>
        <label>MBD2</label>
    </interactant>
    <organismsDiffer>false</organismsDiffer>
    <experiments>4</experiments>
</comment>
<comment type="subcellular location">
    <subcellularLocation>
        <location>Nucleus</location>
    </subcellularLocation>
</comment>
<comment type="tissue specificity">
    <text>Primarily detected in root tissue.</text>
</comment>
<comment type="similarity">
    <text evidence="4">Belongs to the PHD-associated homeobox family.</text>
</comment>
<comment type="sequence caution" evidence="4">
    <conflict type="erroneous initiation">
        <sequence resource="EMBL-CDS" id="BAB02476"/>
    </conflict>
</comment>
<comment type="sequence caution" evidence="4">
    <conflict type="frameshift">
        <sequence resource="EMBL-CDS" id="CAA49263"/>
    </conflict>
</comment>
<accession>Q04996</accession>
<accession>Q8GZA9</accession>
<accession>Q9LT66</accession>
<dbReference type="EMBL" id="X69512">
    <property type="protein sequence ID" value="CAA49263.1"/>
    <property type="status" value="ALT_FRAME"/>
    <property type="molecule type" value="mRNA"/>
</dbReference>
<dbReference type="EMBL" id="AB025624">
    <property type="protein sequence ID" value="BAB02476.1"/>
    <property type="status" value="ALT_INIT"/>
    <property type="molecule type" value="Genomic_DNA"/>
</dbReference>
<dbReference type="EMBL" id="CP002686">
    <property type="protein sequence ID" value="AEE76250.1"/>
    <property type="molecule type" value="Genomic_DNA"/>
</dbReference>
<dbReference type="EMBL" id="CP002686">
    <property type="protein sequence ID" value="ANM64472.1"/>
    <property type="molecule type" value="Genomic_DNA"/>
</dbReference>
<dbReference type="EMBL" id="AK117105">
    <property type="protein sequence ID" value="BAC41784.1"/>
    <property type="molecule type" value="mRNA"/>
</dbReference>
<dbReference type="EMBL" id="BT005965">
    <property type="protein sequence ID" value="AAO64900.1"/>
    <property type="molecule type" value="mRNA"/>
</dbReference>
<dbReference type="PIR" id="S31437">
    <property type="entry name" value="S31437"/>
</dbReference>
<dbReference type="RefSeq" id="NP_001326497.1">
    <property type="nucleotide sequence ID" value="NM_001338403.1"/>
</dbReference>
<dbReference type="RefSeq" id="NP_188582.1">
    <property type="nucleotide sequence ID" value="NM_112838.4"/>
</dbReference>
<dbReference type="BioGRID" id="6818">
    <property type="interactions" value="6"/>
</dbReference>
<dbReference type="FunCoup" id="Q04996">
    <property type="interactions" value="1583"/>
</dbReference>
<dbReference type="IntAct" id="Q04996">
    <property type="interactions" value="5"/>
</dbReference>
<dbReference type="STRING" id="3702.Q04996"/>
<dbReference type="iPTMnet" id="Q04996"/>
<dbReference type="PaxDb" id="3702-AT3G19510.1"/>
<dbReference type="ProteomicsDB" id="230184"/>
<dbReference type="EnsemblPlants" id="AT3G19510.1">
    <property type="protein sequence ID" value="AT3G19510.1"/>
    <property type="gene ID" value="AT3G19510"/>
</dbReference>
<dbReference type="EnsemblPlants" id="AT3G19510.2">
    <property type="protein sequence ID" value="AT3G19510.2"/>
    <property type="gene ID" value="AT3G19510"/>
</dbReference>
<dbReference type="GeneID" id="821485"/>
<dbReference type="Gramene" id="AT3G19510.1">
    <property type="protein sequence ID" value="AT3G19510.1"/>
    <property type="gene ID" value="AT3G19510"/>
</dbReference>
<dbReference type="Gramene" id="AT3G19510.2">
    <property type="protein sequence ID" value="AT3G19510.2"/>
    <property type="gene ID" value="AT3G19510"/>
</dbReference>
<dbReference type="KEGG" id="ath:AT3G19510"/>
<dbReference type="Araport" id="AT3G19510"/>
<dbReference type="TAIR" id="AT3G19510">
    <property type="gene designation" value="HAT3.1"/>
</dbReference>
<dbReference type="eggNOG" id="KOG0490">
    <property type="taxonomic scope" value="Eukaryota"/>
</dbReference>
<dbReference type="eggNOG" id="KOG4299">
    <property type="taxonomic scope" value="Eukaryota"/>
</dbReference>
<dbReference type="HOGENOM" id="CLU_011923_0_0_1"/>
<dbReference type="InParanoid" id="Q04996"/>
<dbReference type="OMA" id="CDCKDDS"/>
<dbReference type="PhylomeDB" id="Q04996"/>
<dbReference type="PRO" id="PR:Q04996"/>
<dbReference type="Proteomes" id="UP000006548">
    <property type="component" value="Chromosome 3"/>
</dbReference>
<dbReference type="ExpressionAtlas" id="Q04996">
    <property type="expression patterns" value="baseline and differential"/>
</dbReference>
<dbReference type="GO" id="GO:0005634">
    <property type="term" value="C:nucleus"/>
    <property type="evidence" value="ECO:0007669"/>
    <property type="project" value="UniProtKB-SubCell"/>
</dbReference>
<dbReference type="GO" id="GO:0003677">
    <property type="term" value="F:DNA binding"/>
    <property type="evidence" value="ECO:0000314"/>
    <property type="project" value="TAIR"/>
</dbReference>
<dbReference type="GO" id="GO:0003700">
    <property type="term" value="F:DNA-binding transcription factor activity"/>
    <property type="evidence" value="ECO:0000250"/>
    <property type="project" value="TAIR"/>
</dbReference>
<dbReference type="GO" id="GO:0043565">
    <property type="term" value="F:sequence-specific DNA binding"/>
    <property type="evidence" value="ECO:0000314"/>
    <property type="project" value="TAIR"/>
</dbReference>
<dbReference type="GO" id="GO:0008270">
    <property type="term" value="F:zinc ion binding"/>
    <property type="evidence" value="ECO:0007669"/>
    <property type="project" value="UniProtKB-KW"/>
</dbReference>
<dbReference type="GO" id="GO:0045893">
    <property type="term" value="P:positive regulation of DNA-templated transcription"/>
    <property type="evidence" value="ECO:0000314"/>
    <property type="project" value="TAIR"/>
</dbReference>
<dbReference type="CDD" id="cd00086">
    <property type="entry name" value="homeodomain"/>
    <property type="match status" value="1"/>
</dbReference>
<dbReference type="CDD" id="cd15504">
    <property type="entry name" value="PHD_PRHA_like"/>
    <property type="match status" value="1"/>
</dbReference>
<dbReference type="FunFam" id="3.30.40.10:FF:000270">
    <property type="entry name" value="pathogenesis-related homeodomain protein-like"/>
    <property type="match status" value="1"/>
</dbReference>
<dbReference type="Gene3D" id="1.10.10.60">
    <property type="entry name" value="Homeodomain-like"/>
    <property type="match status" value="1"/>
</dbReference>
<dbReference type="Gene3D" id="3.30.40.10">
    <property type="entry name" value="Zinc/RING finger domain, C3HC4 (zinc finger)"/>
    <property type="match status" value="1"/>
</dbReference>
<dbReference type="InterPro" id="IPR001356">
    <property type="entry name" value="HD"/>
</dbReference>
<dbReference type="InterPro" id="IPR009057">
    <property type="entry name" value="Homeodomain-like_sf"/>
</dbReference>
<dbReference type="InterPro" id="IPR045876">
    <property type="entry name" value="PRHA-like_PHD-finger"/>
</dbReference>
<dbReference type="InterPro" id="IPR019786">
    <property type="entry name" value="Zinc_finger_PHD-type_CS"/>
</dbReference>
<dbReference type="InterPro" id="IPR011011">
    <property type="entry name" value="Znf_FYVE_PHD"/>
</dbReference>
<dbReference type="InterPro" id="IPR001965">
    <property type="entry name" value="Znf_PHD"/>
</dbReference>
<dbReference type="InterPro" id="IPR019787">
    <property type="entry name" value="Znf_PHD-finger"/>
</dbReference>
<dbReference type="InterPro" id="IPR013083">
    <property type="entry name" value="Znf_RING/FYVE/PHD"/>
</dbReference>
<dbReference type="PANTHER" id="PTHR12628:SF13">
    <property type="entry name" value="HOMEOBOX PROTEIN HAT3.1"/>
    <property type="match status" value="1"/>
</dbReference>
<dbReference type="PANTHER" id="PTHR12628">
    <property type="entry name" value="POLYCOMB-LIKE TRANSCRIPTION FACTOR"/>
    <property type="match status" value="1"/>
</dbReference>
<dbReference type="Pfam" id="PF00046">
    <property type="entry name" value="Homeodomain"/>
    <property type="match status" value="1"/>
</dbReference>
<dbReference type="Pfam" id="PF00628">
    <property type="entry name" value="PHD"/>
    <property type="match status" value="1"/>
</dbReference>
<dbReference type="SMART" id="SM00389">
    <property type="entry name" value="HOX"/>
    <property type="match status" value="1"/>
</dbReference>
<dbReference type="SMART" id="SM00249">
    <property type="entry name" value="PHD"/>
    <property type="match status" value="1"/>
</dbReference>
<dbReference type="SUPFAM" id="SSF57903">
    <property type="entry name" value="FYVE/PHD zinc finger"/>
    <property type="match status" value="1"/>
</dbReference>
<dbReference type="SUPFAM" id="SSF46689">
    <property type="entry name" value="Homeodomain-like"/>
    <property type="match status" value="1"/>
</dbReference>
<dbReference type="PROSITE" id="PS00027">
    <property type="entry name" value="HOMEOBOX_1"/>
    <property type="match status" value="1"/>
</dbReference>
<dbReference type="PROSITE" id="PS50071">
    <property type="entry name" value="HOMEOBOX_2"/>
    <property type="match status" value="1"/>
</dbReference>
<dbReference type="PROSITE" id="PS01359">
    <property type="entry name" value="ZF_PHD_1"/>
    <property type="match status" value="1"/>
</dbReference>
<dbReference type="PROSITE" id="PS50016">
    <property type="entry name" value="ZF_PHD_2"/>
    <property type="match status" value="1"/>
</dbReference>